<accession>Q28RK4</accession>
<reference key="1">
    <citation type="submission" date="2006-02" db="EMBL/GenBank/DDBJ databases">
        <title>Complete sequence of chromosome of Jannaschia sp. CCS1.</title>
        <authorList>
            <consortium name="US DOE Joint Genome Institute"/>
            <person name="Copeland A."/>
            <person name="Lucas S."/>
            <person name="Lapidus A."/>
            <person name="Barry K."/>
            <person name="Detter J.C."/>
            <person name="Glavina del Rio T."/>
            <person name="Hammon N."/>
            <person name="Israni S."/>
            <person name="Pitluck S."/>
            <person name="Brettin T."/>
            <person name="Bruce D."/>
            <person name="Han C."/>
            <person name="Tapia R."/>
            <person name="Gilna P."/>
            <person name="Chertkov O."/>
            <person name="Saunders E."/>
            <person name="Schmutz J."/>
            <person name="Larimer F."/>
            <person name="Land M."/>
            <person name="Kyrpides N."/>
            <person name="Lykidis A."/>
            <person name="Moran M.A."/>
            <person name="Belas R."/>
            <person name="Ye W."/>
            <person name="Buchan A."/>
            <person name="Gonzalez J.M."/>
            <person name="Schell M.A."/>
            <person name="Richardson P."/>
        </authorList>
    </citation>
    <scope>NUCLEOTIDE SEQUENCE [LARGE SCALE GENOMIC DNA]</scope>
    <source>
        <strain>CCS1</strain>
    </source>
</reference>
<gene>
    <name evidence="1" type="primary">pyrE</name>
    <name type="ordered locus">Jann_1741</name>
</gene>
<name>PYRE_JANSC</name>
<organism>
    <name type="scientific">Jannaschia sp. (strain CCS1)</name>
    <dbReference type="NCBI Taxonomy" id="290400"/>
    <lineage>
        <taxon>Bacteria</taxon>
        <taxon>Pseudomonadati</taxon>
        <taxon>Pseudomonadota</taxon>
        <taxon>Alphaproteobacteria</taxon>
        <taxon>Rhodobacterales</taxon>
        <taxon>Roseobacteraceae</taxon>
        <taxon>Jannaschia</taxon>
    </lineage>
</organism>
<comment type="function">
    <text evidence="1">Catalyzes the transfer of a ribosyl phosphate group from 5-phosphoribose 1-diphosphate to orotate, leading to the formation of orotidine monophosphate (OMP).</text>
</comment>
<comment type="catalytic activity">
    <reaction evidence="1">
        <text>orotidine 5'-phosphate + diphosphate = orotate + 5-phospho-alpha-D-ribose 1-diphosphate</text>
        <dbReference type="Rhea" id="RHEA:10380"/>
        <dbReference type="ChEBI" id="CHEBI:30839"/>
        <dbReference type="ChEBI" id="CHEBI:33019"/>
        <dbReference type="ChEBI" id="CHEBI:57538"/>
        <dbReference type="ChEBI" id="CHEBI:58017"/>
        <dbReference type="EC" id="2.4.2.10"/>
    </reaction>
</comment>
<comment type="cofactor">
    <cofactor evidence="1">
        <name>Mg(2+)</name>
        <dbReference type="ChEBI" id="CHEBI:18420"/>
    </cofactor>
</comment>
<comment type="pathway">
    <text evidence="1">Pyrimidine metabolism; UMP biosynthesis via de novo pathway; UMP from orotate: step 1/2.</text>
</comment>
<comment type="subunit">
    <text evidence="1">Homodimer.</text>
</comment>
<comment type="similarity">
    <text evidence="1">Belongs to the purine/pyrimidine phosphoribosyltransferase family. PyrE subfamily.</text>
</comment>
<evidence type="ECO:0000255" key="1">
    <source>
        <dbReference type="HAMAP-Rule" id="MF_01208"/>
    </source>
</evidence>
<protein>
    <recommendedName>
        <fullName evidence="1">Orotate phosphoribosyltransferase</fullName>
        <shortName evidence="1">OPRT</shortName>
        <shortName evidence="1">OPRTase</shortName>
        <ecNumber evidence="1">2.4.2.10</ecNumber>
    </recommendedName>
</protein>
<feature type="chain" id="PRO_1000066243" description="Orotate phosphoribosyltransferase">
    <location>
        <begin position="1"/>
        <end position="228"/>
    </location>
</feature>
<feature type="binding site" evidence="1">
    <location>
        <position position="107"/>
    </location>
    <ligand>
        <name>5-phospho-alpha-D-ribose 1-diphosphate</name>
        <dbReference type="ChEBI" id="CHEBI:58017"/>
        <note>ligand shared between dimeric partners</note>
    </ligand>
</feature>
<feature type="binding site" description="in other chain" evidence="1">
    <location>
        <position position="108"/>
    </location>
    <ligand>
        <name>5-phospho-alpha-D-ribose 1-diphosphate</name>
        <dbReference type="ChEBI" id="CHEBI:58017"/>
        <note>ligand shared between dimeric partners</note>
    </ligand>
</feature>
<feature type="binding site" evidence="1">
    <location>
        <position position="111"/>
    </location>
    <ligand>
        <name>5-phospho-alpha-D-ribose 1-diphosphate</name>
        <dbReference type="ChEBI" id="CHEBI:58017"/>
        <note>ligand shared between dimeric partners</note>
    </ligand>
</feature>
<feature type="binding site" description="in other chain" evidence="1">
    <location>
        <begin position="133"/>
        <end position="141"/>
    </location>
    <ligand>
        <name>5-phospho-alpha-D-ribose 1-diphosphate</name>
        <dbReference type="ChEBI" id="CHEBI:58017"/>
        <note>ligand shared between dimeric partners</note>
    </ligand>
</feature>
<feature type="binding site" evidence="1">
    <location>
        <position position="137"/>
    </location>
    <ligand>
        <name>orotate</name>
        <dbReference type="ChEBI" id="CHEBI:30839"/>
    </ligand>
</feature>
<proteinExistence type="inferred from homology"/>
<keyword id="KW-0328">Glycosyltransferase</keyword>
<keyword id="KW-0460">Magnesium</keyword>
<keyword id="KW-0665">Pyrimidine biosynthesis</keyword>
<keyword id="KW-1185">Reference proteome</keyword>
<keyword id="KW-0808">Transferase</keyword>
<sequence length="228" mass="24728">MIPSTYPNNSTMAAMTARMLLDIRAVHFNTDEPFTHASGLQAPTYIDCRKLISHPRIRSTAMDFLTCKVMRDAGLEAFDNIAGGETAGIPFAAFVAERMALPMSYVRKKPKGYGKTAQIEGEMPEGARVLLVEDLTTDGGSKLKFVDAIRNAGATCAHTAVVFSYGNLPETEANLAAHGLTLHSLTTWADVIAEARRGSDFNEATLTEVERFLSDPGGWRGDRGLNTD</sequence>
<dbReference type="EC" id="2.4.2.10" evidence="1"/>
<dbReference type="EMBL" id="CP000264">
    <property type="protein sequence ID" value="ABD54658.1"/>
    <property type="molecule type" value="Genomic_DNA"/>
</dbReference>
<dbReference type="RefSeq" id="WP_011454863.1">
    <property type="nucleotide sequence ID" value="NC_007802.1"/>
</dbReference>
<dbReference type="SMR" id="Q28RK4"/>
<dbReference type="STRING" id="290400.Jann_1741"/>
<dbReference type="KEGG" id="jan:Jann_1741"/>
<dbReference type="eggNOG" id="COG0461">
    <property type="taxonomic scope" value="Bacteria"/>
</dbReference>
<dbReference type="HOGENOM" id="CLU_074878_1_0_5"/>
<dbReference type="OrthoDB" id="9802134at2"/>
<dbReference type="UniPathway" id="UPA00070">
    <property type="reaction ID" value="UER00119"/>
</dbReference>
<dbReference type="Proteomes" id="UP000008326">
    <property type="component" value="Chromosome"/>
</dbReference>
<dbReference type="GO" id="GO:0000287">
    <property type="term" value="F:magnesium ion binding"/>
    <property type="evidence" value="ECO:0007669"/>
    <property type="project" value="UniProtKB-UniRule"/>
</dbReference>
<dbReference type="GO" id="GO:0004588">
    <property type="term" value="F:orotate phosphoribosyltransferase activity"/>
    <property type="evidence" value="ECO:0007669"/>
    <property type="project" value="UniProtKB-UniRule"/>
</dbReference>
<dbReference type="GO" id="GO:0044205">
    <property type="term" value="P:'de novo' UMP biosynthetic process"/>
    <property type="evidence" value="ECO:0007669"/>
    <property type="project" value="UniProtKB-UniRule"/>
</dbReference>
<dbReference type="GO" id="GO:0019856">
    <property type="term" value="P:pyrimidine nucleobase biosynthetic process"/>
    <property type="evidence" value="ECO:0007669"/>
    <property type="project" value="TreeGrafter"/>
</dbReference>
<dbReference type="CDD" id="cd06223">
    <property type="entry name" value="PRTases_typeI"/>
    <property type="match status" value="1"/>
</dbReference>
<dbReference type="Gene3D" id="3.40.50.2020">
    <property type="match status" value="1"/>
</dbReference>
<dbReference type="HAMAP" id="MF_01208">
    <property type="entry name" value="PyrE"/>
    <property type="match status" value="1"/>
</dbReference>
<dbReference type="InterPro" id="IPR023031">
    <property type="entry name" value="OPRT"/>
</dbReference>
<dbReference type="InterPro" id="IPR004467">
    <property type="entry name" value="Or_phspho_trans_dom"/>
</dbReference>
<dbReference type="InterPro" id="IPR000836">
    <property type="entry name" value="PRibTrfase_dom"/>
</dbReference>
<dbReference type="InterPro" id="IPR029057">
    <property type="entry name" value="PRTase-like"/>
</dbReference>
<dbReference type="NCBIfam" id="NF001729">
    <property type="entry name" value="PRK00455.1-3"/>
    <property type="match status" value="1"/>
</dbReference>
<dbReference type="NCBIfam" id="TIGR00336">
    <property type="entry name" value="pyrE"/>
    <property type="match status" value="1"/>
</dbReference>
<dbReference type="PANTHER" id="PTHR19278">
    <property type="entry name" value="OROTATE PHOSPHORIBOSYLTRANSFERASE"/>
    <property type="match status" value="1"/>
</dbReference>
<dbReference type="PANTHER" id="PTHR19278:SF9">
    <property type="entry name" value="URIDINE 5'-MONOPHOSPHATE SYNTHASE"/>
    <property type="match status" value="1"/>
</dbReference>
<dbReference type="Pfam" id="PF00156">
    <property type="entry name" value="Pribosyltran"/>
    <property type="match status" value="1"/>
</dbReference>
<dbReference type="SUPFAM" id="SSF53271">
    <property type="entry name" value="PRTase-like"/>
    <property type="match status" value="1"/>
</dbReference>